<keyword id="KW-0963">Cytoplasm</keyword>
<keyword id="KW-0349">Heme</keyword>
<keyword id="KW-0408">Iron</keyword>
<keyword id="KW-0479">Metal-binding</keyword>
<keyword id="KW-0503">Monooxygenase</keyword>
<keyword id="KW-0560">Oxidoreductase</keyword>
<gene>
    <name type="primary">cyp105C1</name>
    <name type="synonym">choP</name>
</gene>
<comment type="cofactor">
    <cofactor evidence="1">
        <name>heme</name>
        <dbReference type="ChEBI" id="CHEBI:30413"/>
    </cofactor>
</comment>
<comment type="subcellular location">
    <subcellularLocation>
        <location evidence="1">Cytoplasm</location>
    </subcellularLocation>
</comment>
<comment type="similarity">
    <text evidence="2">Belongs to the cytochrome P450 family.</text>
</comment>
<feature type="chain" id="PRO_0000052216" description="Cytochrome P450 105C1">
    <location>
        <begin position="1"/>
        <end position="381"/>
    </location>
</feature>
<feature type="binding site" description="axial binding residue" evidence="1">
    <location>
        <position position="330"/>
    </location>
    <ligand>
        <name>heme</name>
        <dbReference type="ChEBI" id="CHEBI:30413"/>
    </ligand>
    <ligandPart>
        <name>Fe</name>
        <dbReference type="ChEBI" id="CHEBI:18248"/>
    </ligandPart>
</feature>
<reference key="1">
    <citation type="journal article" date="1990" name="J. Bacteriol.">
        <title>An operon containing the genes for cholesterol oxidase and a cytochrome P-450-like protein from a Streptomyces sp.</title>
        <authorList>
            <person name="Horii M."/>
            <person name="Ishizaki T."/>
            <person name="Paik S.Y."/>
            <person name="Manome T."/>
            <person name="Murooka Y."/>
        </authorList>
    </citation>
    <scope>NUCLEOTIDE SEQUENCE [GENOMIC DNA]</scope>
</reference>
<protein>
    <recommendedName>
        <fullName>Cytochrome P450 105C1</fullName>
        <ecNumber>1.14.-.-</ecNumber>
    </recommendedName>
</protein>
<evidence type="ECO:0000250" key="1"/>
<evidence type="ECO:0000305" key="2"/>
<organism>
    <name type="scientific">Streptomyces sp</name>
    <dbReference type="NCBI Taxonomy" id="1931"/>
    <lineage>
        <taxon>Bacteria</taxon>
        <taxon>Bacillati</taxon>
        <taxon>Actinomycetota</taxon>
        <taxon>Actinomycetes</taxon>
        <taxon>Kitasatosporales</taxon>
        <taxon>Streptomycetaceae</taxon>
        <taxon>Streptomyces</taxon>
    </lineage>
</organism>
<proteinExistence type="inferred from homology"/>
<name>CPXG_STRSQ</name>
<accession>P23296</accession>
<sequence length="381" mass="41704">MTQAAPVTFSTVRENYFGPPAEMQALRHKAPVTRTAFADGRPGWLVTGYSAARAVLSDSRFTARGEREHPAVPRAATLEDERCRRLIAGQFTARRMRQLTGRTERIVREHLDAMEHMGSPADLVEHFALPVPSLVIAELLGVPPPDREHFQHDTLRWGGFGRSTEEVTEAFVSLGGQLQRLVRLKRTEPGDDLLSGLIAADPALTDEELASIAFLLLVAGHGTTAHQIALGAFLLLEHPDQLAALRADPALTESAVEELLRHLSVVHHGPTRAALQDADIEGTPVKAGEVVVVSLGAANRDPARFERPDAVDVTREDTGHLAFGHGMHQCLGRQLARIELRVALTALLERFPHLRLACPAAEIPLRHDMQVYGADRLPVAW</sequence>
<dbReference type="EC" id="1.14.-.-"/>
<dbReference type="EMBL" id="M31939">
    <property type="protein sequence ID" value="AAA26718.1"/>
    <property type="molecule type" value="Genomic_DNA"/>
</dbReference>
<dbReference type="PIR" id="S15809">
    <property type="entry name" value="S15809"/>
</dbReference>
<dbReference type="SMR" id="P23296"/>
<dbReference type="GO" id="GO:0005737">
    <property type="term" value="C:cytoplasm"/>
    <property type="evidence" value="ECO:0007669"/>
    <property type="project" value="UniProtKB-SubCell"/>
</dbReference>
<dbReference type="GO" id="GO:0020037">
    <property type="term" value="F:heme binding"/>
    <property type="evidence" value="ECO:0007669"/>
    <property type="project" value="InterPro"/>
</dbReference>
<dbReference type="GO" id="GO:0005506">
    <property type="term" value="F:iron ion binding"/>
    <property type="evidence" value="ECO:0007669"/>
    <property type="project" value="InterPro"/>
</dbReference>
<dbReference type="GO" id="GO:0004497">
    <property type="term" value="F:monooxygenase activity"/>
    <property type="evidence" value="ECO:0007669"/>
    <property type="project" value="UniProtKB-KW"/>
</dbReference>
<dbReference type="GO" id="GO:0016705">
    <property type="term" value="F:oxidoreductase activity, acting on paired donors, with incorporation or reduction of molecular oxygen"/>
    <property type="evidence" value="ECO:0007669"/>
    <property type="project" value="InterPro"/>
</dbReference>
<dbReference type="CDD" id="cd11030">
    <property type="entry name" value="CYP105-like"/>
    <property type="match status" value="1"/>
</dbReference>
<dbReference type="FunFam" id="1.10.630.10:FF:000018">
    <property type="entry name" value="Cytochrome P450 monooxygenase"/>
    <property type="match status" value="1"/>
</dbReference>
<dbReference type="Gene3D" id="1.10.630.10">
    <property type="entry name" value="Cytochrome P450"/>
    <property type="match status" value="1"/>
</dbReference>
<dbReference type="InterPro" id="IPR001128">
    <property type="entry name" value="Cyt_P450"/>
</dbReference>
<dbReference type="InterPro" id="IPR002397">
    <property type="entry name" value="Cyt_P450_B"/>
</dbReference>
<dbReference type="InterPro" id="IPR017972">
    <property type="entry name" value="Cyt_P450_CS"/>
</dbReference>
<dbReference type="InterPro" id="IPR036396">
    <property type="entry name" value="Cyt_P450_sf"/>
</dbReference>
<dbReference type="PANTHER" id="PTHR46696:SF1">
    <property type="entry name" value="CYTOCHROME P450 YJIB-RELATED"/>
    <property type="match status" value="1"/>
</dbReference>
<dbReference type="PANTHER" id="PTHR46696">
    <property type="entry name" value="P450, PUTATIVE (EUROFUNG)-RELATED"/>
    <property type="match status" value="1"/>
</dbReference>
<dbReference type="Pfam" id="PF00067">
    <property type="entry name" value="p450"/>
    <property type="match status" value="1"/>
</dbReference>
<dbReference type="PRINTS" id="PR00359">
    <property type="entry name" value="BP450"/>
</dbReference>
<dbReference type="PRINTS" id="PR00385">
    <property type="entry name" value="P450"/>
</dbReference>
<dbReference type="SUPFAM" id="SSF48264">
    <property type="entry name" value="Cytochrome P450"/>
    <property type="match status" value="1"/>
</dbReference>
<dbReference type="PROSITE" id="PS00086">
    <property type="entry name" value="CYTOCHROME_P450"/>
    <property type="match status" value="1"/>
</dbReference>